<organism>
    <name type="scientific">Xanthomonas campestris pv. campestris (strain 8004)</name>
    <dbReference type="NCBI Taxonomy" id="314565"/>
    <lineage>
        <taxon>Bacteria</taxon>
        <taxon>Pseudomonadati</taxon>
        <taxon>Pseudomonadota</taxon>
        <taxon>Gammaproteobacteria</taxon>
        <taxon>Lysobacterales</taxon>
        <taxon>Lysobacteraceae</taxon>
        <taxon>Xanthomonas</taxon>
    </lineage>
</organism>
<protein>
    <recommendedName>
        <fullName evidence="1">Chaperone protein HtpG</fullName>
    </recommendedName>
    <alternativeName>
        <fullName evidence="1">Heat shock protein HtpG</fullName>
    </alternativeName>
    <alternativeName>
        <fullName evidence="1">High temperature protein G</fullName>
    </alternativeName>
</protein>
<accession>Q4UVY7</accession>
<feature type="chain" id="PRO_0000224237" description="Chaperone protein HtpG">
    <location>
        <begin position="1"/>
        <end position="634"/>
    </location>
</feature>
<feature type="region of interest" description="A; substrate-binding" evidence="1">
    <location>
        <begin position="1"/>
        <end position="342"/>
    </location>
</feature>
<feature type="region of interest" description="B" evidence="1">
    <location>
        <begin position="343"/>
        <end position="559"/>
    </location>
</feature>
<feature type="region of interest" description="C" evidence="1">
    <location>
        <begin position="560"/>
        <end position="634"/>
    </location>
</feature>
<reference key="1">
    <citation type="journal article" date="2005" name="Genome Res.">
        <title>Comparative and functional genomic analyses of the pathogenicity of phytopathogen Xanthomonas campestris pv. campestris.</title>
        <authorList>
            <person name="Qian W."/>
            <person name="Jia Y."/>
            <person name="Ren S.-X."/>
            <person name="He Y.-Q."/>
            <person name="Feng J.-X."/>
            <person name="Lu L.-F."/>
            <person name="Sun Q."/>
            <person name="Ying G."/>
            <person name="Tang D.-J."/>
            <person name="Tang H."/>
            <person name="Wu W."/>
            <person name="Hao P."/>
            <person name="Wang L."/>
            <person name="Jiang B.-L."/>
            <person name="Zeng S."/>
            <person name="Gu W.-Y."/>
            <person name="Lu G."/>
            <person name="Rong L."/>
            <person name="Tian Y."/>
            <person name="Yao Z."/>
            <person name="Fu G."/>
            <person name="Chen B."/>
            <person name="Fang R."/>
            <person name="Qiang B."/>
            <person name="Chen Z."/>
            <person name="Zhao G.-P."/>
            <person name="Tang J.-L."/>
            <person name="He C."/>
        </authorList>
    </citation>
    <scope>NUCLEOTIDE SEQUENCE [LARGE SCALE GENOMIC DNA]</scope>
    <source>
        <strain>8004</strain>
    </source>
</reference>
<sequence>MTVDTDKQTLGFQTEVKQLLQLMIHSLYSNKEIFLRELVSNAADAADKLRFEALVKPDLLEGSGELRIRVDFDKDARTVTIDDNGIGMSREDAVSHLGTIAKSGTADFLKHLSGDQKKDANLIGQFGVGFYSAFIVADQVDVYSRRAGLPASDGVHWSSRGEGEFEVASVDKPERGTRIVLQLKEGEESFADGWTLRNILKKYSDHIGLPIEMRKEHYGEDADKPAEPEWEVVNRASALWTRPKSEIKDEEYQEFYKHVAHDAGNPLAWSHNKVEGKLDYTSLLFVPGRAPFDLYHRDSAKGLKLYVQRVFIMDQAEQFLPLYLRFIKGVVDSADLSLNVSREILQSGPVVDSMKSALTKRALDMLEKLAKDKPDDYATFWRNFGQALKEGPAEDYANREKVAGLLRFSSTHDTTGAQSVALADYVGRMTEGQDKLYYLTGESYAQIKDSPHLEVFRKKGIEVLLLTDRIDEWLMSYLTEFDSKSFVDVARGDLDLGKLDSEEDKKAQEEVAKSKEGLASRIKAALGDDVAEVRVSHRLTDSPAILAIGQGDLGLQMRQLLEASGQAVPETKPVFEFNPAHPLIEKLDAEQDMDRFGDLSRVLFDQAALAAGDSLKDPAGYVRRLNKLLLELSA</sequence>
<evidence type="ECO:0000255" key="1">
    <source>
        <dbReference type="HAMAP-Rule" id="MF_00505"/>
    </source>
</evidence>
<keyword id="KW-0067">ATP-binding</keyword>
<keyword id="KW-0143">Chaperone</keyword>
<keyword id="KW-0963">Cytoplasm</keyword>
<keyword id="KW-0547">Nucleotide-binding</keyword>
<keyword id="KW-0346">Stress response</keyword>
<gene>
    <name evidence="1" type="primary">htpG</name>
    <name type="ordered locus">XC_1721</name>
</gene>
<dbReference type="EMBL" id="CP000050">
    <property type="protein sequence ID" value="AAY48786.1"/>
    <property type="molecule type" value="Genomic_DNA"/>
</dbReference>
<dbReference type="RefSeq" id="WP_011269645.1">
    <property type="nucleotide sequence ID" value="NC_007086.1"/>
</dbReference>
<dbReference type="SMR" id="Q4UVY7"/>
<dbReference type="KEGG" id="xcb:XC_1721"/>
<dbReference type="HOGENOM" id="CLU_006684_3_0_6"/>
<dbReference type="Proteomes" id="UP000000420">
    <property type="component" value="Chromosome"/>
</dbReference>
<dbReference type="GO" id="GO:0005737">
    <property type="term" value="C:cytoplasm"/>
    <property type="evidence" value="ECO:0007669"/>
    <property type="project" value="UniProtKB-SubCell"/>
</dbReference>
<dbReference type="GO" id="GO:0005524">
    <property type="term" value="F:ATP binding"/>
    <property type="evidence" value="ECO:0007669"/>
    <property type="project" value="UniProtKB-UniRule"/>
</dbReference>
<dbReference type="GO" id="GO:0016887">
    <property type="term" value="F:ATP hydrolysis activity"/>
    <property type="evidence" value="ECO:0007669"/>
    <property type="project" value="InterPro"/>
</dbReference>
<dbReference type="GO" id="GO:0140662">
    <property type="term" value="F:ATP-dependent protein folding chaperone"/>
    <property type="evidence" value="ECO:0007669"/>
    <property type="project" value="InterPro"/>
</dbReference>
<dbReference type="GO" id="GO:0051082">
    <property type="term" value="F:unfolded protein binding"/>
    <property type="evidence" value="ECO:0007669"/>
    <property type="project" value="UniProtKB-UniRule"/>
</dbReference>
<dbReference type="CDD" id="cd16927">
    <property type="entry name" value="HATPase_Hsp90-like"/>
    <property type="match status" value="1"/>
</dbReference>
<dbReference type="FunFam" id="1.20.120.790:FF:000008">
    <property type="entry name" value="Chaperone protein HtpG"/>
    <property type="match status" value="1"/>
</dbReference>
<dbReference type="FunFam" id="3.30.230.80:FF:000002">
    <property type="entry name" value="Molecular chaperone HtpG"/>
    <property type="match status" value="1"/>
</dbReference>
<dbReference type="FunFam" id="3.30.565.10:FF:000009">
    <property type="entry name" value="Molecular chaperone HtpG"/>
    <property type="match status" value="1"/>
</dbReference>
<dbReference type="Gene3D" id="3.30.230.80">
    <property type="match status" value="1"/>
</dbReference>
<dbReference type="Gene3D" id="3.40.50.11260">
    <property type="match status" value="1"/>
</dbReference>
<dbReference type="Gene3D" id="1.20.120.790">
    <property type="entry name" value="Heat shock protein 90, C-terminal domain"/>
    <property type="match status" value="1"/>
</dbReference>
<dbReference type="Gene3D" id="3.30.565.10">
    <property type="entry name" value="Histidine kinase-like ATPase, C-terminal domain"/>
    <property type="match status" value="1"/>
</dbReference>
<dbReference type="HAMAP" id="MF_00505">
    <property type="entry name" value="HSP90"/>
    <property type="match status" value="1"/>
</dbReference>
<dbReference type="InterPro" id="IPR036890">
    <property type="entry name" value="HATPase_C_sf"/>
</dbReference>
<dbReference type="InterPro" id="IPR019805">
    <property type="entry name" value="Heat_shock_protein_90_CS"/>
</dbReference>
<dbReference type="InterPro" id="IPR037196">
    <property type="entry name" value="HSP90_C"/>
</dbReference>
<dbReference type="InterPro" id="IPR001404">
    <property type="entry name" value="Hsp90_fam"/>
</dbReference>
<dbReference type="InterPro" id="IPR020575">
    <property type="entry name" value="Hsp90_N"/>
</dbReference>
<dbReference type="InterPro" id="IPR020568">
    <property type="entry name" value="Ribosomal_Su5_D2-typ_SF"/>
</dbReference>
<dbReference type="NCBIfam" id="NF003555">
    <property type="entry name" value="PRK05218.1"/>
    <property type="match status" value="1"/>
</dbReference>
<dbReference type="PANTHER" id="PTHR11528">
    <property type="entry name" value="HEAT SHOCK PROTEIN 90 FAMILY MEMBER"/>
    <property type="match status" value="1"/>
</dbReference>
<dbReference type="Pfam" id="PF13589">
    <property type="entry name" value="HATPase_c_3"/>
    <property type="match status" value="1"/>
</dbReference>
<dbReference type="Pfam" id="PF00183">
    <property type="entry name" value="HSP90"/>
    <property type="match status" value="1"/>
</dbReference>
<dbReference type="PIRSF" id="PIRSF002583">
    <property type="entry name" value="Hsp90"/>
    <property type="match status" value="1"/>
</dbReference>
<dbReference type="PRINTS" id="PR00775">
    <property type="entry name" value="HEATSHOCK90"/>
</dbReference>
<dbReference type="SMART" id="SM00387">
    <property type="entry name" value="HATPase_c"/>
    <property type="match status" value="1"/>
</dbReference>
<dbReference type="SUPFAM" id="SSF55874">
    <property type="entry name" value="ATPase domain of HSP90 chaperone/DNA topoisomerase II/histidine kinase"/>
    <property type="match status" value="1"/>
</dbReference>
<dbReference type="SUPFAM" id="SSF110942">
    <property type="entry name" value="HSP90 C-terminal domain"/>
    <property type="match status" value="1"/>
</dbReference>
<dbReference type="SUPFAM" id="SSF54211">
    <property type="entry name" value="Ribosomal protein S5 domain 2-like"/>
    <property type="match status" value="1"/>
</dbReference>
<dbReference type="PROSITE" id="PS00298">
    <property type="entry name" value="HSP90"/>
    <property type="match status" value="1"/>
</dbReference>
<comment type="function">
    <text evidence="1">Molecular chaperone. Has ATPase activity.</text>
</comment>
<comment type="subunit">
    <text evidence="1">Homodimer.</text>
</comment>
<comment type="subcellular location">
    <subcellularLocation>
        <location evidence="1">Cytoplasm</location>
    </subcellularLocation>
</comment>
<comment type="similarity">
    <text evidence="1">Belongs to the heat shock protein 90 family.</text>
</comment>
<proteinExistence type="inferred from homology"/>
<name>HTPG_XANC8</name>